<keyword id="KW-0963">Cytoplasm</keyword>
<keyword id="KW-0597">Phosphoprotein</keyword>
<keyword id="KW-0675">Receptor</keyword>
<keyword id="KW-1185">Reference proteome</keyword>
<evidence type="ECO:0000250" key="1"/>
<evidence type="ECO:0000250" key="2">
    <source>
        <dbReference type="UniProtKB" id="Q9BW04"/>
    </source>
</evidence>
<evidence type="ECO:0000256" key="3">
    <source>
        <dbReference type="SAM" id="MobiDB-lite"/>
    </source>
</evidence>
<evidence type="ECO:0000305" key="4"/>
<sequence>MPERELWPAGPGLEPATRVGSCDSMMSTTSTRSGSSDSSYDFLSAEEKECLLFLEETIGSLDTEADSGLSTEKSEQATTPQVPRALPKTQPAPQGHPEEITGRVPEPKRVTPFSSAHPPGPQSLGLRSGSYSLPRNIHIGRNQNLRKSTTLTNSHNPGGSEGLVSGPETEQVSQSREPRQTLATPPDAALELDGALIPPPEAFRDTQPQQRGQGSLPRGPGELSPRPQVHPSLSSQRNREPAPEAMSQKASEKGSTGEPVPPRPPPLVSSRDAGSGDAAVLSGGHPSARPAPLTAPKPRKLPPNIVLKSSRSSFHSDPQNRLSRHSEAAPGDPSPASSSLQEQRKARREALEKLGLPQDQEEPSPRLSRPSVRLKETGVQAVSPAPAQVPGRAPAAAPTQGPSPGKAPALAQPPSPGKVLVPAQESTPGTAPAAKSTPIPIPKGPRAHSPLTQRKPDSGLTLQESGVPGLRQMSFKSNTLERSGIGLSSYLSAEKASSPQTSTSLEKGSFLDRISPSVLRNSRPRPASLGTGKDFEGIQVGKLADLEQEGGPKRLSFQGQSRDKLPRPPCVSVRISPKGVSDEHRREALKKLGLLKE</sequence>
<name>SARG_BOVIN</name>
<reference key="1">
    <citation type="submission" date="2007-04" db="EMBL/GenBank/DDBJ databases">
        <authorList>
            <consortium name="NIH - Mammalian Gene Collection (MGC) project"/>
        </authorList>
    </citation>
    <scope>NUCLEOTIDE SEQUENCE [LARGE SCALE MRNA]</scope>
    <source>
        <strain>Hereford</strain>
        <tissue>Fetal skin</tissue>
    </source>
</reference>
<protein>
    <recommendedName>
        <fullName>Specifically androgen-regulated gene protein</fullName>
    </recommendedName>
</protein>
<accession>A5D7K1</accession>
<organism>
    <name type="scientific">Bos taurus</name>
    <name type="common">Bovine</name>
    <dbReference type="NCBI Taxonomy" id="9913"/>
    <lineage>
        <taxon>Eukaryota</taxon>
        <taxon>Metazoa</taxon>
        <taxon>Chordata</taxon>
        <taxon>Craniata</taxon>
        <taxon>Vertebrata</taxon>
        <taxon>Euteleostomi</taxon>
        <taxon>Mammalia</taxon>
        <taxon>Eutheria</taxon>
        <taxon>Laurasiatheria</taxon>
        <taxon>Artiodactyla</taxon>
        <taxon>Ruminantia</taxon>
        <taxon>Pecora</taxon>
        <taxon>Bovidae</taxon>
        <taxon>Bovinae</taxon>
        <taxon>Bos</taxon>
    </lineage>
</organism>
<feature type="chain" id="PRO_0000318574" description="Specifically androgen-regulated gene protein">
    <location>
        <begin position="1"/>
        <end position="597"/>
    </location>
</feature>
<feature type="region of interest" description="Disordered" evidence="3">
    <location>
        <begin position="1"/>
        <end position="40"/>
    </location>
</feature>
<feature type="region of interest" description="Disordered" evidence="3">
    <location>
        <begin position="63"/>
        <end position="477"/>
    </location>
</feature>
<feature type="region of interest" description="Disordered" evidence="3">
    <location>
        <begin position="492"/>
        <end position="585"/>
    </location>
</feature>
<feature type="compositionally biased region" description="Low complexity" evidence="3">
    <location>
        <begin position="20"/>
        <end position="39"/>
    </location>
</feature>
<feature type="compositionally biased region" description="Polar residues" evidence="3">
    <location>
        <begin position="68"/>
        <end position="81"/>
    </location>
</feature>
<feature type="compositionally biased region" description="Basic and acidic residues" evidence="3">
    <location>
        <begin position="96"/>
        <end position="109"/>
    </location>
</feature>
<feature type="compositionally biased region" description="Polar residues" evidence="3">
    <location>
        <begin position="141"/>
        <end position="157"/>
    </location>
</feature>
<feature type="compositionally biased region" description="Polar residues" evidence="3">
    <location>
        <begin position="307"/>
        <end position="321"/>
    </location>
</feature>
<feature type="compositionally biased region" description="Low complexity" evidence="3">
    <location>
        <begin position="328"/>
        <end position="339"/>
    </location>
</feature>
<feature type="compositionally biased region" description="Basic and acidic residues" evidence="3">
    <location>
        <begin position="342"/>
        <end position="352"/>
    </location>
</feature>
<feature type="compositionally biased region" description="Polar residues" evidence="3">
    <location>
        <begin position="492"/>
        <end position="506"/>
    </location>
</feature>
<feature type="modified residue" description="Phosphoserine" evidence="2">
    <location>
        <position position="130"/>
    </location>
</feature>
<feature type="modified residue" description="Phosphoserine" evidence="2">
    <location>
        <position position="132"/>
    </location>
</feature>
<feature type="modified residue" description="Phosphoserine" evidence="2">
    <location>
        <position position="515"/>
    </location>
</feature>
<gene>
    <name type="primary">SARG</name>
</gene>
<comment type="function">
    <text evidence="1">Putative androgen-specific receptor.</text>
</comment>
<comment type="subcellular location">
    <subcellularLocation>
        <location evidence="1">Cytoplasm</location>
    </subcellularLocation>
</comment>
<comment type="similarity">
    <text evidence="4">Belongs to the SARG family.</text>
</comment>
<proteinExistence type="evidence at transcript level"/>
<dbReference type="EMBL" id="BC140587">
    <property type="protein sequence ID" value="AAI40588.1"/>
    <property type="molecule type" value="mRNA"/>
</dbReference>
<dbReference type="RefSeq" id="NP_001091934.1">
    <property type="nucleotide sequence ID" value="NM_001098464.1"/>
</dbReference>
<dbReference type="SMR" id="A5D7K1"/>
<dbReference type="FunCoup" id="A5D7K1">
    <property type="interactions" value="111"/>
</dbReference>
<dbReference type="STRING" id="9913.ENSBTAP00000024149"/>
<dbReference type="PaxDb" id="9913-ENSBTAP00000024149"/>
<dbReference type="PeptideAtlas" id="A5D7K1"/>
<dbReference type="GeneID" id="539441"/>
<dbReference type="KEGG" id="bta:539441"/>
<dbReference type="CTD" id="539441"/>
<dbReference type="VEuPathDB" id="HostDB:ENSBTAG00000018143"/>
<dbReference type="eggNOG" id="ENOG502RGW5">
    <property type="taxonomic scope" value="Eukaryota"/>
</dbReference>
<dbReference type="HOGENOM" id="CLU_035136_0_0_1"/>
<dbReference type="InParanoid" id="A5D7K1"/>
<dbReference type="OMA" id="HSEPQSW"/>
<dbReference type="OrthoDB" id="9898538at2759"/>
<dbReference type="TreeFam" id="TF336615"/>
<dbReference type="Proteomes" id="UP000009136">
    <property type="component" value="Chromosome 16"/>
</dbReference>
<dbReference type="Bgee" id="ENSBTAG00000018143">
    <property type="expression patterns" value="Expressed in esophagus and 65 other cell types or tissues"/>
</dbReference>
<dbReference type="GO" id="GO:0005737">
    <property type="term" value="C:cytoplasm"/>
    <property type="evidence" value="ECO:0000318"/>
    <property type="project" value="GO_Central"/>
</dbReference>
<dbReference type="InterPro" id="IPR026152">
    <property type="entry name" value="SARG"/>
</dbReference>
<dbReference type="PANTHER" id="PTHR21555">
    <property type="entry name" value="SPECIFICALLY ANDROGEN-REGULATED GENE PROTEIN"/>
    <property type="match status" value="1"/>
</dbReference>
<dbReference type="PANTHER" id="PTHR21555:SF0">
    <property type="entry name" value="SPECIFICALLY ANDROGEN-REGULATED GENE PROTEIN"/>
    <property type="match status" value="1"/>
</dbReference>
<dbReference type="Pfam" id="PF15385">
    <property type="entry name" value="SARG"/>
    <property type="match status" value="1"/>
</dbReference>